<evidence type="ECO:0000255" key="1">
    <source>
        <dbReference type="HAMAP-Rule" id="MF_01537"/>
    </source>
</evidence>
<accession>A9BM59</accession>
<feature type="chain" id="PRO_1000198655" description="Pyrimidine/purine nucleoside phosphorylase">
    <location>
        <begin position="1"/>
        <end position="105"/>
    </location>
</feature>
<organism>
    <name type="scientific">Delftia acidovorans (strain DSM 14801 / SPH-1)</name>
    <dbReference type="NCBI Taxonomy" id="398578"/>
    <lineage>
        <taxon>Bacteria</taxon>
        <taxon>Pseudomonadati</taxon>
        <taxon>Pseudomonadota</taxon>
        <taxon>Betaproteobacteria</taxon>
        <taxon>Burkholderiales</taxon>
        <taxon>Comamonadaceae</taxon>
        <taxon>Delftia</taxon>
    </lineage>
</organism>
<name>PPNP_DELAS</name>
<proteinExistence type="inferred from homology"/>
<sequence length="105" mass="11298">MTTETISGITLTTKANVYFDGKCISHGFTLADGTKKSAGVVLPSQLTFGTAAAEIMECVAGSCEYKLDGSDQWLTSKAGESFQVPANSKFDIRVTEAYHYICHYA</sequence>
<dbReference type="EC" id="2.4.2.1" evidence="1"/>
<dbReference type="EC" id="2.4.2.2" evidence="1"/>
<dbReference type="EMBL" id="CP000884">
    <property type="protein sequence ID" value="ABX37404.1"/>
    <property type="molecule type" value="Genomic_DNA"/>
</dbReference>
<dbReference type="RefSeq" id="WP_012206574.1">
    <property type="nucleotide sequence ID" value="NC_010002.1"/>
</dbReference>
<dbReference type="SMR" id="A9BM59"/>
<dbReference type="STRING" id="398578.Daci_4775"/>
<dbReference type="KEGG" id="dac:Daci_4775"/>
<dbReference type="eggNOG" id="COG3123">
    <property type="taxonomic scope" value="Bacteria"/>
</dbReference>
<dbReference type="HOGENOM" id="CLU_157874_1_0_4"/>
<dbReference type="Proteomes" id="UP000000784">
    <property type="component" value="Chromosome"/>
</dbReference>
<dbReference type="GO" id="GO:0005829">
    <property type="term" value="C:cytosol"/>
    <property type="evidence" value="ECO:0007669"/>
    <property type="project" value="TreeGrafter"/>
</dbReference>
<dbReference type="GO" id="GO:0047975">
    <property type="term" value="F:guanosine phosphorylase activity"/>
    <property type="evidence" value="ECO:0007669"/>
    <property type="project" value="UniProtKB-EC"/>
</dbReference>
<dbReference type="GO" id="GO:0004731">
    <property type="term" value="F:purine-nucleoside phosphorylase activity"/>
    <property type="evidence" value="ECO:0007669"/>
    <property type="project" value="UniProtKB-UniRule"/>
</dbReference>
<dbReference type="GO" id="GO:0009032">
    <property type="term" value="F:thymidine phosphorylase activity"/>
    <property type="evidence" value="ECO:0007669"/>
    <property type="project" value="UniProtKB-EC"/>
</dbReference>
<dbReference type="GO" id="GO:0004850">
    <property type="term" value="F:uridine phosphorylase activity"/>
    <property type="evidence" value="ECO:0007669"/>
    <property type="project" value="UniProtKB-EC"/>
</dbReference>
<dbReference type="CDD" id="cd20296">
    <property type="entry name" value="cupin_PpnP-like"/>
    <property type="match status" value="1"/>
</dbReference>
<dbReference type="Gene3D" id="2.60.120.10">
    <property type="entry name" value="Jelly Rolls"/>
    <property type="match status" value="1"/>
</dbReference>
<dbReference type="HAMAP" id="MF_01537">
    <property type="entry name" value="Nucleos_phosphorylase_PpnP"/>
    <property type="match status" value="1"/>
</dbReference>
<dbReference type="InterPro" id="IPR009664">
    <property type="entry name" value="Ppnp"/>
</dbReference>
<dbReference type="InterPro" id="IPR014710">
    <property type="entry name" value="RmlC-like_jellyroll"/>
</dbReference>
<dbReference type="InterPro" id="IPR011051">
    <property type="entry name" value="RmlC_Cupin_sf"/>
</dbReference>
<dbReference type="PANTHER" id="PTHR36540">
    <property type="entry name" value="PYRIMIDINE/PURINE NUCLEOSIDE PHOSPHORYLASE"/>
    <property type="match status" value="1"/>
</dbReference>
<dbReference type="PANTHER" id="PTHR36540:SF1">
    <property type="entry name" value="PYRIMIDINE_PURINE NUCLEOSIDE PHOSPHORYLASE"/>
    <property type="match status" value="1"/>
</dbReference>
<dbReference type="Pfam" id="PF06865">
    <property type="entry name" value="Ppnp"/>
    <property type="match status" value="1"/>
</dbReference>
<dbReference type="SUPFAM" id="SSF51182">
    <property type="entry name" value="RmlC-like cupins"/>
    <property type="match status" value="1"/>
</dbReference>
<reference key="1">
    <citation type="submission" date="2007-11" db="EMBL/GenBank/DDBJ databases">
        <title>Complete sequence of Delftia acidovorans DSM 14801 / SPH-1.</title>
        <authorList>
            <person name="Copeland A."/>
            <person name="Lucas S."/>
            <person name="Lapidus A."/>
            <person name="Barry K."/>
            <person name="Glavina del Rio T."/>
            <person name="Dalin E."/>
            <person name="Tice H."/>
            <person name="Pitluck S."/>
            <person name="Lowry S."/>
            <person name="Clum A."/>
            <person name="Schmutz J."/>
            <person name="Larimer F."/>
            <person name="Land M."/>
            <person name="Hauser L."/>
            <person name="Kyrpides N."/>
            <person name="Kim E."/>
            <person name="Schleheck D."/>
            <person name="Richardson P."/>
        </authorList>
    </citation>
    <scope>NUCLEOTIDE SEQUENCE [LARGE SCALE GENOMIC DNA]</scope>
    <source>
        <strain>DSM 14801 / SPH-1</strain>
    </source>
</reference>
<gene>
    <name evidence="1" type="primary">ppnP</name>
    <name type="ordered locus">Daci_4775</name>
</gene>
<comment type="function">
    <text evidence="1">Catalyzes the phosphorolysis of diverse nucleosides, yielding D-ribose 1-phosphate and the respective free bases. Can use uridine, adenosine, guanosine, cytidine, thymidine, inosine and xanthosine as substrates. Also catalyzes the reverse reactions.</text>
</comment>
<comment type="catalytic activity">
    <reaction evidence="1">
        <text>a purine D-ribonucleoside + phosphate = a purine nucleobase + alpha-D-ribose 1-phosphate</text>
        <dbReference type="Rhea" id="RHEA:19805"/>
        <dbReference type="ChEBI" id="CHEBI:26386"/>
        <dbReference type="ChEBI" id="CHEBI:43474"/>
        <dbReference type="ChEBI" id="CHEBI:57720"/>
        <dbReference type="ChEBI" id="CHEBI:142355"/>
        <dbReference type="EC" id="2.4.2.1"/>
    </reaction>
</comment>
<comment type="catalytic activity">
    <reaction evidence="1">
        <text>adenosine + phosphate = alpha-D-ribose 1-phosphate + adenine</text>
        <dbReference type="Rhea" id="RHEA:27642"/>
        <dbReference type="ChEBI" id="CHEBI:16335"/>
        <dbReference type="ChEBI" id="CHEBI:16708"/>
        <dbReference type="ChEBI" id="CHEBI:43474"/>
        <dbReference type="ChEBI" id="CHEBI:57720"/>
        <dbReference type="EC" id="2.4.2.1"/>
    </reaction>
</comment>
<comment type="catalytic activity">
    <reaction evidence="1">
        <text>cytidine + phosphate = cytosine + alpha-D-ribose 1-phosphate</text>
        <dbReference type="Rhea" id="RHEA:52540"/>
        <dbReference type="ChEBI" id="CHEBI:16040"/>
        <dbReference type="ChEBI" id="CHEBI:17562"/>
        <dbReference type="ChEBI" id="CHEBI:43474"/>
        <dbReference type="ChEBI" id="CHEBI:57720"/>
        <dbReference type="EC" id="2.4.2.2"/>
    </reaction>
</comment>
<comment type="catalytic activity">
    <reaction evidence="1">
        <text>guanosine + phosphate = alpha-D-ribose 1-phosphate + guanine</text>
        <dbReference type="Rhea" id="RHEA:13233"/>
        <dbReference type="ChEBI" id="CHEBI:16235"/>
        <dbReference type="ChEBI" id="CHEBI:16750"/>
        <dbReference type="ChEBI" id="CHEBI:43474"/>
        <dbReference type="ChEBI" id="CHEBI:57720"/>
        <dbReference type="EC" id="2.4.2.1"/>
    </reaction>
</comment>
<comment type="catalytic activity">
    <reaction evidence="1">
        <text>inosine + phosphate = alpha-D-ribose 1-phosphate + hypoxanthine</text>
        <dbReference type="Rhea" id="RHEA:27646"/>
        <dbReference type="ChEBI" id="CHEBI:17368"/>
        <dbReference type="ChEBI" id="CHEBI:17596"/>
        <dbReference type="ChEBI" id="CHEBI:43474"/>
        <dbReference type="ChEBI" id="CHEBI:57720"/>
        <dbReference type="EC" id="2.4.2.1"/>
    </reaction>
</comment>
<comment type="catalytic activity">
    <reaction evidence="1">
        <text>thymidine + phosphate = 2-deoxy-alpha-D-ribose 1-phosphate + thymine</text>
        <dbReference type="Rhea" id="RHEA:16037"/>
        <dbReference type="ChEBI" id="CHEBI:17748"/>
        <dbReference type="ChEBI" id="CHEBI:17821"/>
        <dbReference type="ChEBI" id="CHEBI:43474"/>
        <dbReference type="ChEBI" id="CHEBI:57259"/>
        <dbReference type="EC" id="2.4.2.2"/>
    </reaction>
</comment>
<comment type="catalytic activity">
    <reaction evidence="1">
        <text>uridine + phosphate = alpha-D-ribose 1-phosphate + uracil</text>
        <dbReference type="Rhea" id="RHEA:24388"/>
        <dbReference type="ChEBI" id="CHEBI:16704"/>
        <dbReference type="ChEBI" id="CHEBI:17568"/>
        <dbReference type="ChEBI" id="CHEBI:43474"/>
        <dbReference type="ChEBI" id="CHEBI:57720"/>
        <dbReference type="EC" id="2.4.2.2"/>
    </reaction>
</comment>
<comment type="catalytic activity">
    <reaction evidence="1">
        <text>xanthosine + phosphate = alpha-D-ribose 1-phosphate + xanthine</text>
        <dbReference type="Rhea" id="RHEA:27638"/>
        <dbReference type="ChEBI" id="CHEBI:17712"/>
        <dbReference type="ChEBI" id="CHEBI:18107"/>
        <dbReference type="ChEBI" id="CHEBI:43474"/>
        <dbReference type="ChEBI" id="CHEBI:57720"/>
        <dbReference type="EC" id="2.4.2.1"/>
    </reaction>
</comment>
<comment type="similarity">
    <text evidence="1">Belongs to the nucleoside phosphorylase PpnP family.</text>
</comment>
<keyword id="KW-0328">Glycosyltransferase</keyword>
<keyword id="KW-1185">Reference proteome</keyword>
<keyword id="KW-0808">Transferase</keyword>
<protein>
    <recommendedName>
        <fullName evidence="1">Pyrimidine/purine nucleoside phosphorylase</fullName>
        <ecNumber evidence="1">2.4.2.1</ecNumber>
        <ecNumber evidence="1">2.4.2.2</ecNumber>
    </recommendedName>
    <alternativeName>
        <fullName evidence="1">Adenosine phosphorylase</fullName>
    </alternativeName>
    <alternativeName>
        <fullName evidence="1">Cytidine phosphorylase</fullName>
    </alternativeName>
    <alternativeName>
        <fullName evidence="1">Guanosine phosphorylase</fullName>
    </alternativeName>
    <alternativeName>
        <fullName evidence="1">Inosine phosphorylase</fullName>
    </alternativeName>
    <alternativeName>
        <fullName evidence="1">Thymidine phosphorylase</fullName>
    </alternativeName>
    <alternativeName>
        <fullName evidence="1">Uridine phosphorylase</fullName>
    </alternativeName>
    <alternativeName>
        <fullName evidence="1">Xanthosine phosphorylase</fullName>
    </alternativeName>
</protein>